<proteinExistence type="inferred from homology"/>
<name>ETV3_ATEGE</name>
<accession>A2D4Z7</accession>
<dbReference type="EMBL" id="DQ976641">
    <property type="protein sequence ID" value="ABM65994.1"/>
    <property type="molecule type" value="Genomic_DNA"/>
</dbReference>
<dbReference type="OrthoDB" id="10067219at2759"/>
<dbReference type="GO" id="GO:0005634">
    <property type="term" value="C:nucleus"/>
    <property type="evidence" value="ECO:0007669"/>
    <property type="project" value="UniProtKB-SubCell"/>
</dbReference>
<dbReference type="GO" id="GO:0000981">
    <property type="term" value="F:DNA-binding transcription factor activity, RNA polymerase II-specific"/>
    <property type="evidence" value="ECO:0007669"/>
    <property type="project" value="TreeGrafter"/>
</dbReference>
<dbReference type="GO" id="GO:0043565">
    <property type="term" value="F:sequence-specific DNA binding"/>
    <property type="evidence" value="ECO:0007669"/>
    <property type="project" value="InterPro"/>
</dbReference>
<dbReference type="GO" id="GO:0030154">
    <property type="term" value="P:cell differentiation"/>
    <property type="evidence" value="ECO:0007669"/>
    <property type="project" value="TreeGrafter"/>
</dbReference>
<dbReference type="FunFam" id="1.10.10.10:FF:000059">
    <property type="entry name" value="ETS translocation variant 3"/>
    <property type="match status" value="1"/>
</dbReference>
<dbReference type="Gene3D" id="1.10.10.10">
    <property type="entry name" value="Winged helix-like DNA-binding domain superfamily/Winged helix DNA-binding domain"/>
    <property type="match status" value="1"/>
</dbReference>
<dbReference type="InterPro" id="IPR000418">
    <property type="entry name" value="Ets_dom"/>
</dbReference>
<dbReference type="InterPro" id="IPR046328">
    <property type="entry name" value="ETS_fam"/>
</dbReference>
<dbReference type="InterPro" id="IPR036388">
    <property type="entry name" value="WH-like_DNA-bd_sf"/>
</dbReference>
<dbReference type="InterPro" id="IPR036390">
    <property type="entry name" value="WH_DNA-bd_sf"/>
</dbReference>
<dbReference type="PANTHER" id="PTHR11849">
    <property type="entry name" value="ETS"/>
    <property type="match status" value="1"/>
</dbReference>
<dbReference type="PANTHER" id="PTHR11849:SF30">
    <property type="entry name" value="ETS TRANSLOCATION VARIANT 3"/>
    <property type="match status" value="1"/>
</dbReference>
<dbReference type="Pfam" id="PF00178">
    <property type="entry name" value="Ets"/>
    <property type="match status" value="1"/>
</dbReference>
<dbReference type="PRINTS" id="PR00454">
    <property type="entry name" value="ETSDOMAIN"/>
</dbReference>
<dbReference type="SMART" id="SM00413">
    <property type="entry name" value="ETS"/>
    <property type="match status" value="1"/>
</dbReference>
<dbReference type="SUPFAM" id="SSF46785">
    <property type="entry name" value="Winged helix' DNA-binding domain"/>
    <property type="match status" value="1"/>
</dbReference>
<dbReference type="PROSITE" id="PS00345">
    <property type="entry name" value="ETS_DOMAIN_1"/>
    <property type="match status" value="1"/>
</dbReference>
<dbReference type="PROSITE" id="PS00346">
    <property type="entry name" value="ETS_DOMAIN_2"/>
    <property type="match status" value="1"/>
</dbReference>
<dbReference type="PROSITE" id="PS50061">
    <property type="entry name" value="ETS_DOMAIN_3"/>
    <property type="match status" value="1"/>
</dbReference>
<organism>
    <name type="scientific">Ateles geoffroyi</name>
    <name type="common">Black-handed spider monkey</name>
    <name type="synonym">Geoffroy's spider monkey</name>
    <dbReference type="NCBI Taxonomy" id="9509"/>
    <lineage>
        <taxon>Eukaryota</taxon>
        <taxon>Metazoa</taxon>
        <taxon>Chordata</taxon>
        <taxon>Craniata</taxon>
        <taxon>Vertebrata</taxon>
        <taxon>Euteleostomi</taxon>
        <taxon>Mammalia</taxon>
        <taxon>Eutheria</taxon>
        <taxon>Euarchontoglires</taxon>
        <taxon>Primates</taxon>
        <taxon>Haplorrhini</taxon>
        <taxon>Platyrrhini</taxon>
        <taxon>Atelidae</taxon>
        <taxon>Atelinae</taxon>
        <taxon>Ateles</taxon>
    </lineage>
</organism>
<evidence type="ECO:0000250" key="1"/>
<evidence type="ECO:0000250" key="2">
    <source>
        <dbReference type="UniProtKB" id="P41162"/>
    </source>
</evidence>
<evidence type="ECO:0000250" key="3">
    <source>
        <dbReference type="UniProtKB" id="Q8R4Z4"/>
    </source>
</evidence>
<evidence type="ECO:0000255" key="4">
    <source>
        <dbReference type="PROSITE-ProRule" id="PRU00237"/>
    </source>
</evidence>
<evidence type="ECO:0000256" key="5">
    <source>
        <dbReference type="SAM" id="MobiDB-lite"/>
    </source>
</evidence>
<evidence type="ECO:0000305" key="6"/>
<protein>
    <recommendedName>
        <fullName>ETS translocation variant 3</fullName>
    </recommendedName>
</protein>
<feature type="chain" id="PRO_0000285520" description="ETS translocation variant 3">
    <location>
        <begin position="1"/>
        <end position="512"/>
    </location>
</feature>
<feature type="DNA-binding region" description="ETS" evidence="4">
    <location>
        <begin position="35"/>
        <end position="116"/>
    </location>
</feature>
<feature type="region of interest" description="Disordered" evidence="5">
    <location>
        <begin position="138"/>
        <end position="196"/>
    </location>
</feature>
<feature type="region of interest" description="Disordered" evidence="5">
    <location>
        <begin position="341"/>
        <end position="512"/>
    </location>
</feature>
<feature type="compositionally biased region" description="Polar residues" evidence="5">
    <location>
        <begin position="158"/>
        <end position="184"/>
    </location>
</feature>
<feature type="compositionally biased region" description="Basic and acidic residues" evidence="5">
    <location>
        <begin position="380"/>
        <end position="406"/>
    </location>
</feature>
<feature type="compositionally biased region" description="Acidic residues" evidence="5">
    <location>
        <begin position="443"/>
        <end position="452"/>
    </location>
</feature>
<feature type="compositionally biased region" description="Basic and acidic residues" evidence="5">
    <location>
        <begin position="453"/>
        <end position="468"/>
    </location>
</feature>
<feature type="compositionally biased region" description="Basic and acidic residues" evidence="5">
    <location>
        <begin position="479"/>
        <end position="491"/>
    </location>
</feature>
<feature type="modified residue" description="Phosphoserine" evidence="2">
    <location>
        <position position="139"/>
    </location>
</feature>
<feature type="modified residue" description="Phosphoserine" evidence="2">
    <location>
        <position position="159"/>
    </location>
</feature>
<feature type="modified residue" description="Phosphoserine" evidence="3">
    <location>
        <position position="315"/>
    </location>
</feature>
<feature type="modified residue" description="N6-acetyllysine; alternate" evidence="2">
    <location>
        <position position="388"/>
    </location>
</feature>
<feature type="cross-link" description="Glycyl lysine isopeptide (Lys-Gly) (interchain with G-Cter in SUMO2)" evidence="2">
    <location>
        <position position="381"/>
    </location>
</feature>
<feature type="cross-link" description="Glycyl lysine isopeptide (Lys-Gly) (interchain with G-Cter in SUMO2); alternate" evidence="2">
    <location>
        <position position="388"/>
    </location>
</feature>
<comment type="function">
    <text evidence="1">Transcriptional repressor that contribute to growth arrest during terminal macrophage differentiation by repressing target genes involved in Ras-dependent proliferation. Represses MMP1 promoter activity (By similarity).</text>
</comment>
<comment type="subcellular location">
    <subcellularLocation>
        <location evidence="4">Nucleus</location>
    </subcellularLocation>
</comment>
<comment type="similarity">
    <text evidence="6">Belongs to the ETS family.</text>
</comment>
<reference key="1">
    <citation type="submission" date="2006-08" db="EMBL/GenBank/DDBJ databases">
        <title>Positive selection in transcription factor genes on the human lineage.</title>
        <authorList>
            <person name="Nickel G.C."/>
            <person name="Tefft D.L."/>
            <person name="Trevarthen K."/>
            <person name="Funt J."/>
            <person name="Adams M.D."/>
        </authorList>
    </citation>
    <scope>NUCLEOTIDE SEQUENCE [GENOMIC DNA]</scope>
</reference>
<sequence length="512" mass="57010">MKAGCSMVEKPEGGGGYQFPDWAYKTESSPGSXXIQLWHFILELLQKEEFRHVIAWQQGEYGEFVIKDPDEVARLWGRRKCKPQMNYDKLSRALRYYYNKRILHKTKGKRFTYKFNFNKLVMPNYPFINIRSSGVVPQSAPPVPTASSRFHFPPLDTHSPTSDVQPGRFSASSLTASGQESSNGTDRKAELSXLEDGSAADWRRGVDLMSSRNAVGGGGISHQKRKPDIMLPLFARPGMYPDPHSPFAVSPIPGRGGVLNVPISPALSLTPTIFSYSPSPGLSPFTSSSCFSFNPEEMKHYLHSQACSVFNYHLSPRTFPRYPGLMVPPLQCQMHPEESTQFSIKLQPPPVGRKNRERVESSEESAPVTVPTMAPIPPRIKVEPASEKDAESLRQSAREKEEHTXEEGTVPSRTIEEEKGTIFARPAAPPIWPSVPISTPSEEPLEVTEDIEDRPGKEPSAPEKKEDALMPPKLRLKRRWNDDPEARELSKSGKFLWNGSGPQGLATAAADA</sequence>
<keyword id="KW-0007">Acetylation</keyword>
<keyword id="KW-0238">DNA-binding</keyword>
<keyword id="KW-1017">Isopeptide bond</keyword>
<keyword id="KW-0539">Nucleus</keyword>
<keyword id="KW-0597">Phosphoprotein</keyword>
<keyword id="KW-0678">Repressor</keyword>
<keyword id="KW-0804">Transcription</keyword>
<keyword id="KW-0805">Transcription regulation</keyword>
<keyword id="KW-0832">Ubl conjugation</keyword>
<gene>
    <name type="primary">ETV3</name>
</gene>